<feature type="peptide" id="PRO_0000366044" description="Brevinin-2PTd">
    <location>
        <begin position="1"/>
        <end position="33"/>
    </location>
</feature>
<feature type="disulfide bond">
    <location>
        <begin position="27"/>
        <end position="33"/>
    </location>
</feature>
<organism>
    <name type="scientific">Pulchrana picturata</name>
    <name type="common">Malaysian fire frog</name>
    <name type="synonym">Hylarana picturata</name>
    <dbReference type="NCBI Taxonomy" id="395594"/>
    <lineage>
        <taxon>Eukaryota</taxon>
        <taxon>Metazoa</taxon>
        <taxon>Chordata</taxon>
        <taxon>Craniata</taxon>
        <taxon>Vertebrata</taxon>
        <taxon>Euteleostomi</taxon>
        <taxon>Amphibia</taxon>
        <taxon>Batrachia</taxon>
        <taxon>Anura</taxon>
        <taxon>Neobatrachia</taxon>
        <taxon>Ranoidea</taxon>
        <taxon>Ranidae</taxon>
        <taxon>Pulchrana</taxon>
    </lineage>
</organism>
<protein>
    <recommendedName>
        <fullName>Brevinin-2PTd</fullName>
    </recommendedName>
</protein>
<sequence>GFLDSFKNAMIGVAKSAGKTALNTLACKIDKTC</sequence>
<keyword id="KW-0878">Amphibian defense peptide</keyword>
<keyword id="KW-0044">Antibiotic</keyword>
<keyword id="KW-0929">Antimicrobial</keyword>
<keyword id="KW-0903">Direct protein sequencing</keyword>
<keyword id="KW-1015">Disulfide bond</keyword>
<keyword id="KW-0964">Secreted</keyword>
<name>BR2D_PULPI</name>
<comment type="function">
    <text evidence="1">Has antibacterial activity against the Gram-positive bacterium S.aureus ATCC 25923 and the Gram-negative bacterium E.coli ATCC 25726.</text>
</comment>
<comment type="subcellular location">
    <subcellularLocation>
        <location>Secreted</location>
    </subcellularLocation>
</comment>
<comment type="tissue specificity">
    <text>Expressed by the skin glands.</text>
</comment>
<comment type="mass spectrometry"/>
<comment type="similarity">
    <text evidence="2">Belongs to the frog skin active peptide (FSAP) family. Brevinin subfamily.</text>
</comment>
<evidence type="ECO:0000269" key="1">
    <source>
    </source>
</evidence>
<evidence type="ECO:0000305" key="2"/>
<proteinExistence type="evidence at protein level"/>
<dbReference type="SMR" id="P0C8T6"/>
<dbReference type="GO" id="GO:0005576">
    <property type="term" value="C:extracellular region"/>
    <property type="evidence" value="ECO:0007669"/>
    <property type="project" value="UniProtKB-SubCell"/>
</dbReference>
<dbReference type="GO" id="GO:0042742">
    <property type="term" value="P:defense response to bacterium"/>
    <property type="evidence" value="ECO:0007669"/>
    <property type="project" value="UniProtKB-KW"/>
</dbReference>
<dbReference type="InterPro" id="IPR012521">
    <property type="entry name" value="Antimicrobial_frog_2"/>
</dbReference>
<dbReference type="Pfam" id="PF08023">
    <property type="entry name" value="Antimicrobial_2"/>
    <property type="match status" value="1"/>
</dbReference>
<accession>P0C8T6</accession>
<reference key="1">
    <citation type="journal article" date="2008" name="Toxicon">
        <title>Characterization of antimicrobial peptides from the skin secretions of the Malaysian frogs, Odorrana hosii and Hylarana picturata (Anura:Ranidae).</title>
        <authorList>
            <person name="Conlon J.M."/>
            <person name="Kolodziejek J."/>
            <person name="Nowotny N."/>
            <person name="Leprince J."/>
            <person name="Vaudry H."/>
            <person name="Coquet L."/>
            <person name="Jouenne T."/>
            <person name="King J.D."/>
        </authorList>
    </citation>
    <scope>PROTEIN SEQUENCE</scope>
    <scope>FUNCTION</scope>
    <scope>MASS SPECTROMETRY</scope>
    <source>
        <tissue>Skin secretion</tissue>
    </source>
</reference>